<gene>
    <name evidence="18" type="primary">beta4GalT7</name>
    <name evidence="18" type="synonym">beta-4GalT7</name>
    <name evidence="11" type="synonym">beta4Gal-T7</name>
    <name evidence="9" type="synonym">betaGalT7</name>
    <name evidence="10" type="synonym">dbeta4GalTI</name>
    <name evidence="18" type="ORF">CG11780</name>
</gene>
<protein>
    <recommendedName>
        <fullName evidence="3">Beta-1,4-galactosyltransferase 7</fullName>
        <ecNumber evidence="4 5 6 7">2.4.1.133</ecNumber>
    </recommendedName>
    <alternativeName>
        <fullName evidence="10">Proteoglycan UDP-galactose:beta-xylose beta1,4-galactosyltransferase I</fullName>
    </alternativeName>
    <alternativeName>
        <fullName evidence="9">Xylosylprotein beta 4-galactosyltransferase</fullName>
    </alternativeName>
</protein>
<comment type="function">
    <text evidence="4 5 6 7">Transfers galactose from UDP-D-Galactose (UDP-Gal) to the acceptor xylose residue in the linkage tetrasaccharide region of the glycosaminoglycan side chain of proteoglycans (PubMed:12215432, PubMed:12244071, PubMed:12590131, PubMed:20236943). No activity towards beta-GlcNAc, beta-Glc, beta-Gal, and beta-GalNAc as acceptors (PubMed:12244071, PubMed:12590131).</text>
</comment>
<comment type="catalytic activity">
    <reaction evidence="4 5 6 7">
        <text>3-O-(beta-D-xylosyl)-L-seryl-[protein] + UDP-alpha-D-galactose = 3-O-(beta-D-galactosyl-(1-&gt;4)-beta-D-xylosyl)-L-seryl-[protein] + UDP + H(+)</text>
        <dbReference type="Rhea" id="RHEA:15297"/>
        <dbReference type="Rhea" id="RHEA-COMP:12567"/>
        <dbReference type="Rhea" id="RHEA-COMP:12570"/>
        <dbReference type="ChEBI" id="CHEBI:15378"/>
        <dbReference type="ChEBI" id="CHEBI:58223"/>
        <dbReference type="ChEBI" id="CHEBI:66914"/>
        <dbReference type="ChEBI" id="CHEBI:132085"/>
        <dbReference type="ChEBI" id="CHEBI:132088"/>
        <dbReference type="EC" id="2.4.1.133"/>
    </reaction>
</comment>
<comment type="cofactor">
    <cofactor evidence="3 4 5">
        <name>Mn(2+)</name>
        <dbReference type="ChEBI" id="CHEBI:29035"/>
    </cofactor>
    <text evidence="7 8">Binds 1 manganese ion per subunit.</text>
</comment>
<comment type="biophysicochemical properties">
    <phDependence>
        <text evidence="4 5">Optimum pH is 6.5.</text>
    </phDependence>
    <temperatureDependence>
        <text evidence="4">Optimum temperature is 30-37 degrees Celsius.</text>
    </temperatureDependence>
</comment>
<comment type="pathway">
    <text evidence="3 4">Protein modification; protein glycosylation.</text>
</comment>
<comment type="subcellular location">
    <subcellularLocation>
        <location evidence="13">Golgi apparatus membrane</location>
        <topology evidence="3">Single-pass type II membrane protein</topology>
    </subcellularLocation>
</comment>
<comment type="tissue specificity">
    <text evidence="4">Expressed in male and female adults (PubMed:12215432). Expressed in head (PubMed:12215432).</text>
</comment>
<comment type="developmental stage">
    <text evidence="4">Expressed at all developmental stages, including in embryos, instar stages and pupae.</text>
</comment>
<comment type="disruption phenotype">
    <text evidence="4 6">RNAi-mediated knockdown is lethal (PubMed:12590131). RNAi-mediated knockdown in imaginal disks causes a reduction in the wing size and a distal truncation of the legs (PubMed:12215432). Also, synthesis of heparan sulfate and chondroitin sulfate is reduced in the posterior region of late third instar wing imaginal disk (PubMed:12215432).</text>
</comment>
<comment type="similarity">
    <text evidence="3">Belongs to the glycosyltransferase 7 family.</text>
</comment>
<keyword id="KW-0002">3D-structure</keyword>
<keyword id="KW-1015">Disulfide bond</keyword>
<keyword id="KW-0325">Glycoprotein</keyword>
<keyword id="KW-0328">Glycosyltransferase</keyword>
<keyword id="KW-0333">Golgi apparatus</keyword>
<keyword id="KW-0464">Manganese</keyword>
<keyword id="KW-0472">Membrane</keyword>
<keyword id="KW-0479">Metal-binding</keyword>
<keyword id="KW-0547">Nucleotide-binding</keyword>
<keyword id="KW-1185">Reference proteome</keyword>
<keyword id="KW-0735">Signal-anchor</keyword>
<keyword id="KW-0808">Transferase</keyword>
<keyword id="KW-0812">Transmembrane</keyword>
<keyword id="KW-1133">Transmembrane helix</keyword>
<feature type="chain" id="PRO_0000458118" description="Beta-1,4-galactosyltransferase 7">
    <location>
        <begin position="1"/>
        <end position="322"/>
    </location>
</feature>
<feature type="topological domain" description="Cytoplasmic" evidence="12">
    <location>
        <begin position="1"/>
        <end position="9"/>
    </location>
</feature>
<feature type="transmembrane region" description="Helical; Signal-anchor for type II membrane protein" evidence="1">
    <location>
        <begin position="10"/>
        <end position="30"/>
    </location>
</feature>
<feature type="topological domain" description="Lumenal" evidence="12">
    <location>
        <begin position="31"/>
        <end position="322"/>
    </location>
</feature>
<feature type="binding site" evidence="8 14 20 21 22 23">
    <location>
        <position position="82"/>
    </location>
    <ligand>
        <name>UDP-alpha-D-galactose</name>
        <dbReference type="ChEBI" id="CHEBI:66914"/>
    </ligand>
</feature>
<feature type="binding site" evidence="8 14 20 21 22 23">
    <location>
        <position position="84"/>
    </location>
    <ligand>
        <name>UDP-alpha-D-galactose</name>
        <dbReference type="ChEBI" id="CHEBI:66914"/>
    </ligand>
</feature>
<feature type="binding site" evidence="8 21 23">
    <location>
        <position position="145"/>
    </location>
    <ligand>
        <name>UDP-alpha-D-galactose</name>
        <dbReference type="ChEBI" id="CHEBI:66914"/>
    </ligand>
</feature>
<feature type="binding site" evidence="8 14 20 21 22 23">
    <location>
        <position position="146"/>
    </location>
    <ligand>
        <name>UDP-alpha-D-galactose</name>
        <dbReference type="ChEBI" id="CHEBI:66914"/>
    </ligand>
</feature>
<feature type="binding site" evidence="7 8 20 21 22 23">
    <location>
        <position position="147"/>
    </location>
    <ligand>
        <name>Mn(2+)</name>
        <dbReference type="ChEBI" id="CHEBI:29035"/>
    </ligand>
</feature>
<feature type="binding site" evidence="8 14 20 21 22 23">
    <location>
        <position position="177"/>
    </location>
    <ligand>
        <name>UDP-alpha-D-galactose</name>
        <dbReference type="ChEBI" id="CHEBI:66914"/>
    </ligand>
</feature>
<feature type="binding site" evidence="8 21 23">
    <location>
        <position position="185"/>
    </location>
    <ligand>
        <name>UDP-alpha-D-galactose</name>
        <dbReference type="ChEBI" id="CHEBI:66914"/>
    </ligand>
</feature>
<feature type="binding site" evidence="8 14 20 21 22 23">
    <location>
        <position position="207"/>
    </location>
    <ligand>
        <name>UDP-alpha-D-galactose</name>
        <dbReference type="ChEBI" id="CHEBI:66914"/>
    </ligand>
</feature>
<feature type="binding site" evidence="8 21 23">
    <location>
        <position position="208"/>
    </location>
    <ligand>
        <name>UDP-alpha-D-galactose</name>
        <dbReference type="ChEBI" id="CHEBI:66914"/>
    </ligand>
</feature>
<feature type="binding site" evidence="7 22 23">
    <location>
        <position position="209"/>
    </location>
    <ligand>
        <name>beta-D-xylose</name>
        <dbReference type="ChEBI" id="CHEBI:28161"/>
    </ligand>
</feature>
<feature type="binding site" evidence="8 21 23">
    <location>
        <position position="210"/>
    </location>
    <ligand>
        <name>UDP-alpha-D-galactose</name>
        <dbReference type="ChEBI" id="CHEBI:66914"/>
    </ligand>
</feature>
<feature type="binding site" evidence="7 22 23">
    <location>
        <position position="211"/>
    </location>
    <ligand>
        <name>beta-D-xylose</name>
        <dbReference type="ChEBI" id="CHEBI:28161"/>
    </ligand>
</feature>
<feature type="binding site" evidence="7 22 23">
    <location>
        <position position="212"/>
    </location>
    <ligand>
        <name>beta-D-xylose</name>
        <dbReference type="ChEBI" id="CHEBI:28161"/>
    </ligand>
</feature>
<feature type="binding site" evidence="7 8 20 21 22 23">
    <location>
        <position position="241"/>
    </location>
    <ligand>
        <name>Mn(2+)</name>
        <dbReference type="ChEBI" id="CHEBI:29035"/>
    </ligand>
</feature>
<feature type="binding site" evidence="8 14 20 21 22 23">
    <location>
        <position position="241"/>
    </location>
    <ligand>
        <name>UDP-alpha-D-galactose</name>
        <dbReference type="ChEBI" id="CHEBI:66914"/>
    </ligand>
</feature>
<feature type="binding site" evidence="7 8 20 21 22 23">
    <location>
        <position position="243"/>
    </location>
    <ligand>
        <name>Mn(2+)</name>
        <dbReference type="ChEBI" id="CHEBI:29035"/>
    </ligand>
</feature>
<feature type="binding site" evidence="8 14 20 21 22 23">
    <location>
        <position position="243"/>
    </location>
    <ligand>
        <name>UDP-alpha-D-galactose</name>
        <dbReference type="ChEBI" id="CHEBI:66914"/>
    </ligand>
</feature>
<feature type="binding site" evidence="8 14 20 21 22 23">
    <location>
        <position position="250"/>
    </location>
    <ligand>
        <name>UDP-alpha-D-galactose</name>
        <dbReference type="ChEBI" id="CHEBI:66914"/>
    </ligand>
</feature>
<feature type="glycosylation site" description="N-linked (GlcNAc...) asparagine" evidence="2">
    <location>
        <position position="236"/>
    </location>
</feature>
<feature type="disulfide bond" evidence="7 8 20 21 22 23">
    <location>
        <begin position="255"/>
        <end position="310"/>
    </location>
</feature>
<feature type="disulfide bond" evidence="7 8 20 21 22 23">
    <location>
        <begin position="300"/>
        <end position="308"/>
    </location>
</feature>
<feature type="sequence conflict" description="In Ref. 1; BAC22695." evidence="12" ref="1">
    <original>L</original>
    <variation>V</variation>
    <location>
        <position position="27"/>
    </location>
</feature>
<feature type="sequence conflict" description="In Ref. 5; AAM11018." evidence="12" ref="5">
    <original>D</original>
    <variation>G</variation>
    <location>
        <position position="212"/>
    </location>
</feature>
<feature type="sequence conflict" description="In Ref. 1; BAC22695." evidence="12" ref="1">
    <original>Y</original>
    <variation>F</variation>
    <location>
        <position position="276"/>
    </location>
</feature>
<feature type="strand" evidence="24">
    <location>
        <begin position="76"/>
        <end position="85"/>
    </location>
</feature>
<feature type="helix" evidence="24">
    <location>
        <begin position="87"/>
        <end position="103"/>
    </location>
</feature>
<feature type="strand" evidence="24">
    <location>
        <begin position="107"/>
        <end position="115"/>
    </location>
</feature>
<feature type="strand" evidence="24">
    <location>
        <begin position="117"/>
        <end position="119"/>
    </location>
</feature>
<feature type="helix" evidence="24">
    <location>
        <begin position="123"/>
        <end position="133"/>
    </location>
</feature>
<feature type="strand" evidence="24">
    <location>
        <begin position="140"/>
        <end position="144"/>
    </location>
</feature>
<feature type="strand" evidence="24">
    <location>
        <begin position="148"/>
        <end position="150"/>
    </location>
</feature>
<feature type="strand" evidence="24">
    <location>
        <begin position="166"/>
        <end position="169"/>
    </location>
</feature>
<feature type="turn" evidence="24">
    <location>
        <begin position="171"/>
        <end position="173"/>
    </location>
</feature>
<feature type="strand" evidence="24">
    <location>
        <begin position="185"/>
        <end position="190"/>
    </location>
</feature>
<feature type="helix" evidence="24">
    <location>
        <begin position="191"/>
        <end position="196"/>
    </location>
</feature>
<feature type="strand" evidence="24">
    <location>
        <begin position="206"/>
        <end position="209"/>
    </location>
</feature>
<feature type="helix" evidence="24">
    <location>
        <begin position="210"/>
        <end position="220"/>
    </location>
</feature>
<feature type="turn" evidence="24">
    <location>
        <begin position="235"/>
        <end position="237"/>
    </location>
</feature>
<feature type="strand" evidence="24">
    <location>
        <begin position="238"/>
        <end position="241"/>
    </location>
</feature>
<feature type="turn" evidence="24">
    <location>
        <begin position="245"/>
        <end position="247"/>
    </location>
</feature>
<feature type="helix" evidence="24">
    <location>
        <begin position="258"/>
        <end position="262"/>
    </location>
</feature>
<feature type="helix" evidence="24">
    <location>
        <begin position="271"/>
        <end position="273"/>
    </location>
</feature>
<feature type="strand" evidence="24">
    <location>
        <begin position="276"/>
        <end position="286"/>
    </location>
</feature>
<feature type="strand" evidence="24">
    <location>
        <begin position="289"/>
        <end position="298"/>
    </location>
</feature>
<feature type="turn" evidence="24">
    <location>
        <begin position="302"/>
        <end position="304"/>
    </location>
</feature>
<feature type="helix" evidence="24">
    <location>
        <begin position="306"/>
        <end position="308"/>
    </location>
</feature>
<accession>Q9VBZ9</accession>
<accession>Q8I6J0</accession>
<accession>Q8T3P3</accession>
<evidence type="ECO:0000255" key="1"/>
<evidence type="ECO:0000255" key="2">
    <source>
        <dbReference type="PROSITE-ProRule" id="PRU00498"/>
    </source>
</evidence>
<evidence type="ECO:0000255" key="3">
    <source>
        <dbReference type="RuleBase" id="RU368121"/>
    </source>
</evidence>
<evidence type="ECO:0000269" key="4">
    <source>
    </source>
</evidence>
<evidence type="ECO:0000269" key="5">
    <source>
    </source>
</evidence>
<evidence type="ECO:0000269" key="6">
    <source>
    </source>
</evidence>
<evidence type="ECO:0000269" key="7">
    <source>
    </source>
</evidence>
<evidence type="ECO:0000269" key="8">
    <source>
    </source>
</evidence>
<evidence type="ECO:0000303" key="9">
    <source>
    </source>
</evidence>
<evidence type="ECO:0000303" key="10">
    <source>
    </source>
</evidence>
<evidence type="ECO:0000303" key="11">
    <source>
    </source>
</evidence>
<evidence type="ECO:0000305" key="12"/>
<evidence type="ECO:0000305" key="13">
    <source>
    </source>
</evidence>
<evidence type="ECO:0000305" key="14">
    <source>
    </source>
</evidence>
<evidence type="ECO:0000312" key="15">
    <source>
        <dbReference type="EMBL" id="AAM11018.1"/>
    </source>
</evidence>
<evidence type="ECO:0000312" key="16">
    <source>
        <dbReference type="EMBL" id="ACH95293.1"/>
    </source>
</evidence>
<evidence type="ECO:0000312" key="17">
    <source>
        <dbReference type="EMBL" id="BAC22695.1"/>
    </source>
</evidence>
<evidence type="ECO:0000312" key="18">
    <source>
        <dbReference type="FlyBase" id="FBgn0039258"/>
    </source>
</evidence>
<evidence type="ECO:0000312" key="19">
    <source>
        <dbReference type="Proteomes" id="UP000000803"/>
    </source>
</evidence>
<evidence type="ECO:0007744" key="20">
    <source>
        <dbReference type="PDB" id="3LW6"/>
    </source>
</evidence>
<evidence type="ECO:0007744" key="21">
    <source>
        <dbReference type="PDB" id="4LW3"/>
    </source>
</evidence>
<evidence type="ECO:0007744" key="22">
    <source>
        <dbReference type="PDB" id="4LW6"/>
    </source>
</evidence>
<evidence type="ECO:0007744" key="23">
    <source>
        <dbReference type="PDB" id="4M4K"/>
    </source>
</evidence>
<evidence type="ECO:0007829" key="24">
    <source>
        <dbReference type="PDB" id="3LW6"/>
    </source>
</evidence>
<dbReference type="EC" id="2.4.1.133" evidence="4 5 6 7"/>
<dbReference type="EMBL" id="AB091099">
    <property type="protein sequence ID" value="BAC22695.1"/>
    <property type="molecule type" value="mRNA"/>
</dbReference>
<dbReference type="EMBL" id="BT044519">
    <property type="protein sequence ID" value="ACH95293.1"/>
    <property type="molecule type" value="mRNA"/>
</dbReference>
<dbReference type="EMBL" id="AE014297">
    <property type="protein sequence ID" value="AAF56377.1"/>
    <property type="molecule type" value="Genomic_DNA"/>
</dbReference>
<dbReference type="EMBL" id="AY094665">
    <property type="protein sequence ID" value="AAM11018.1"/>
    <property type="molecule type" value="mRNA"/>
</dbReference>
<dbReference type="RefSeq" id="NP_651319.2">
    <property type="nucleotide sequence ID" value="NM_143062.3"/>
</dbReference>
<dbReference type="PDB" id="3LW6">
    <property type="method" value="X-ray"/>
    <property type="resolution" value="1.81 A"/>
    <property type="chains" value="A=71-311"/>
</dbReference>
<dbReference type="PDB" id="4LW3">
    <property type="method" value="X-ray"/>
    <property type="resolution" value="2.00 A"/>
    <property type="chains" value="A=71-311"/>
</dbReference>
<dbReference type="PDB" id="4LW6">
    <property type="method" value="X-ray"/>
    <property type="resolution" value="2.40 A"/>
    <property type="chains" value="A=71-311"/>
</dbReference>
<dbReference type="PDB" id="4M4K">
    <property type="method" value="X-ray"/>
    <property type="resolution" value="2.20 A"/>
    <property type="chains" value="A=71-311"/>
</dbReference>
<dbReference type="PDBsum" id="3LW6"/>
<dbReference type="PDBsum" id="4LW3"/>
<dbReference type="PDBsum" id="4LW6"/>
<dbReference type="PDBsum" id="4M4K"/>
<dbReference type="SMR" id="Q9VBZ9"/>
<dbReference type="FunCoup" id="Q9VBZ9">
    <property type="interactions" value="1389"/>
</dbReference>
<dbReference type="STRING" id="7227.FBpp0084130"/>
<dbReference type="CAZy" id="GT7">
    <property type="family name" value="Glycosyltransferase Family 7"/>
</dbReference>
<dbReference type="GlyGen" id="Q9VBZ9">
    <property type="glycosylation" value="1 site"/>
</dbReference>
<dbReference type="PaxDb" id="7227-FBpp0084130"/>
<dbReference type="DNASU" id="42991"/>
<dbReference type="EnsemblMetazoa" id="FBtr0084755">
    <property type="protein sequence ID" value="FBpp0084130"/>
    <property type="gene ID" value="FBgn0039258"/>
</dbReference>
<dbReference type="GeneID" id="42991"/>
<dbReference type="KEGG" id="dme:Dmel_CG11780"/>
<dbReference type="UCSC" id="CG11780-RA">
    <property type="organism name" value="d. melanogaster"/>
</dbReference>
<dbReference type="AGR" id="FB:FBgn0039258"/>
<dbReference type="CTD" id="42991"/>
<dbReference type="FlyBase" id="FBgn0039258">
    <property type="gene designation" value="beta4GalT7"/>
</dbReference>
<dbReference type="VEuPathDB" id="VectorBase:FBgn0039258"/>
<dbReference type="eggNOG" id="KOG3917">
    <property type="taxonomic scope" value="Eukaryota"/>
</dbReference>
<dbReference type="GeneTree" id="ENSGT00940000157712"/>
<dbReference type="HOGENOM" id="CLU_044391_5_0_1"/>
<dbReference type="InParanoid" id="Q9VBZ9"/>
<dbReference type="OMA" id="NWLFVCG"/>
<dbReference type="OrthoDB" id="6020664at2759"/>
<dbReference type="BRENDA" id="2.4.1.133">
    <property type="organism ID" value="1994"/>
</dbReference>
<dbReference type="Reactome" id="R-DME-1971475">
    <property type="pathway name" value="A tetrasaccharide linker sequence is required for GAG synthesis"/>
</dbReference>
<dbReference type="UniPathway" id="UPA00378"/>
<dbReference type="BioGRID-ORCS" id="42991">
    <property type="hits" value="0 hits in 1 CRISPR screen"/>
</dbReference>
<dbReference type="EvolutionaryTrace" id="Q9VBZ9"/>
<dbReference type="GenomeRNAi" id="42991"/>
<dbReference type="PRO" id="PR:Q9VBZ9"/>
<dbReference type="Proteomes" id="UP000000803">
    <property type="component" value="Chromosome 3R"/>
</dbReference>
<dbReference type="Bgee" id="FBgn0039258">
    <property type="expression patterns" value="Expressed in spermatocyte in testis and 46 other cell types or tissues"/>
</dbReference>
<dbReference type="ExpressionAtlas" id="Q9VBZ9">
    <property type="expression patterns" value="baseline and differential"/>
</dbReference>
<dbReference type="GO" id="GO:0005794">
    <property type="term" value="C:Golgi apparatus"/>
    <property type="evidence" value="ECO:0000318"/>
    <property type="project" value="GO_Central"/>
</dbReference>
<dbReference type="GO" id="GO:0000139">
    <property type="term" value="C:Golgi membrane"/>
    <property type="evidence" value="ECO:0000314"/>
    <property type="project" value="FlyBase"/>
</dbReference>
<dbReference type="GO" id="GO:0046872">
    <property type="term" value="F:metal ion binding"/>
    <property type="evidence" value="ECO:0000250"/>
    <property type="project" value="FlyBase"/>
</dbReference>
<dbReference type="GO" id="GO:0000166">
    <property type="term" value="F:nucleotide binding"/>
    <property type="evidence" value="ECO:0007669"/>
    <property type="project" value="UniProtKB-KW"/>
</dbReference>
<dbReference type="GO" id="GO:0046525">
    <property type="term" value="F:xylosylprotein 4-beta-galactosyltransferase activity"/>
    <property type="evidence" value="ECO:0000314"/>
    <property type="project" value="FlyBase"/>
</dbReference>
<dbReference type="GO" id="GO:0005975">
    <property type="term" value="P:carbohydrate metabolic process"/>
    <property type="evidence" value="ECO:0007669"/>
    <property type="project" value="InterPro"/>
</dbReference>
<dbReference type="GO" id="GO:0050650">
    <property type="term" value="P:chondroitin sulfate proteoglycan biosynthetic process"/>
    <property type="evidence" value="ECO:0000315"/>
    <property type="project" value="FlyBase"/>
</dbReference>
<dbReference type="GO" id="GO:0120532">
    <property type="term" value="P:glycosaminoglycan-protein linkage region biosynthetic process"/>
    <property type="evidence" value="ECO:0000314"/>
    <property type="project" value="FlyBase"/>
</dbReference>
<dbReference type="GO" id="GO:0070085">
    <property type="term" value="P:glycosylation"/>
    <property type="evidence" value="ECO:0000318"/>
    <property type="project" value="GO_Central"/>
</dbReference>
<dbReference type="GO" id="GO:0015012">
    <property type="term" value="P:heparan sulfate proteoglycan biosynthetic process"/>
    <property type="evidence" value="ECO:0000315"/>
    <property type="project" value="FlyBase"/>
</dbReference>
<dbReference type="GO" id="GO:0006491">
    <property type="term" value="P:N-glycan processing"/>
    <property type="evidence" value="ECO:0000314"/>
    <property type="project" value="FlyBase"/>
</dbReference>
<dbReference type="GO" id="GO:0030166">
    <property type="term" value="P:proteoglycan biosynthetic process"/>
    <property type="evidence" value="ECO:0000318"/>
    <property type="project" value="GO_Central"/>
</dbReference>
<dbReference type="CDD" id="cd00899">
    <property type="entry name" value="b4GalT"/>
    <property type="match status" value="1"/>
</dbReference>
<dbReference type="FunFam" id="3.90.550.10:FF:000062">
    <property type="entry name" value="beta-1,4-galactosyltransferase 7 isoform X1"/>
    <property type="match status" value="1"/>
</dbReference>
<dbReference type="Gene3D" id="3.90.550.10">
    <property type="entry name" value="Spore Coat Polysaccharide Biosynthesis Protein SpsA, Chain A"/>
    <property type="match status" value="1"/>
</dbReference>
<dbReference type="InterPro" id="IPR003859">
    <property type="entry name" value="Galactosyl_T"/>
</dbReference>
<dbReference type="InterPro" id="IPR027791">
    <property type="entry name" value="Galactosyl_T_C"/>
</dbReference>
<dbReference type="InterPro" id="IPR027995">
    <property type="entry name" value="Galactosyl_T_N"/>
</dbReference>
<dbReference type="InterPro" id="IPR029044">
    <property type="entry name" value="Nucleotide-diphossugar_trans"/>
</dbReference>
<dbReference type="PANTHER" id="PTHR19300">
    <property type="entry name" value="BETA-1,4-GALACTOSYLTRANSFERASE"/>
    <property type="match status" value="1"/>
</dbReference>
<dbReference type="PANTHER" id="PTHR19300:SF30">
    <property type="entry name" value="BETA-1,4-GALACTOSYLTRANSFERASE 7"/>
    <property type="match status" value="1"/>
</dbReference>
<dbReference type="Pfam" id="PF02709">
    <property type="entry name" value="Glyco_transf_7C"/>
    <property type="match status" value="1"/>
</dbReference>
<dbReference type="Pfam" id="PF13733">
    <property type="entry name" value="Glyco_transf_7N"/>
    <property type="match status" value="1"/>
</dbReference>
<dbReference type="PRINTS" id="PR02050">
    <property type="entry name" value="B14GALTRFASE"/>
</dbReference>
<dbReference type="SUPFAM" id="SSF53448">
    <property type="entry name" value="Nucleotide-diphospho-sugar transferases"/>
    <property type="match status" value="1"/>
</dbReference>
<reference evidence="17" key="1">
    <citation type="journal article" date="2002" name="J. Biol. Chem.">
        <title>Identification of a Drosophila gene encoding xylosylprotein beta4-galactosyltransferase that is essential for the synthesis of glycosaminoglycans and for morphogenesis.</title>
        <authorList>
            <person name="Nakamura Y."/>
            <person name="Haines N."/>
            <person name="Chen J."/>
            <person name="Okajima T."/>
            <person name="Furukawa K."/>
            <person name="Urano T."/>
            <person name="Stanley P."/>
            <person name="Irvine K.D."/>
            <person name="Furukawa K."/>
        </authorList>
    </citation>
    <scope>NUCLEOTIDE SEQUENCE [MRNA]</scope>
    <scope>FUNCTION</scope>
    <scope>CATALYTIC ACTIVITY</scope>
    <scope>COFACTOR</scope>
    <scope>BIOPHYSICOCHEMICAL PROPERTIES</scope>
    <scope>PATHWAY</scope>
    <scope>DEVELOPMENTAL STAGE</scope>
    <scope>TISSUE SPECIFICITY</scope>
    <scope>DISRUPTION PHENOTYPE</scope>
</reference>
<reference evidence="16" key="2">
    <citation type="submission" date="2008-09" db="EMBL/GenBank/DDBJ databases">
        <authorList>
            <person name="Han Y."/>
            <person name="Li G."/>
            <person name="Jiang D."/>
        </authorList>
    </citation>
    <scope>NUCLEOTIDE SEQUENCE [MRNA]</scope>
</reference>
<reference evidence="19" key="3">
    <citation type="journal article" date="2000" name="Science">
        <title>The genome sequence of Drosophila melanogaster.</title>
        <authorList>
            <person name="Adams M.D."/>
            <person name="Celniker S.E."/>
            <person name="Holt R.A."/>
            <person name="Evans C.A."/>
            <person name="Gocayne J.D."/>
            <person name="Amanatides P.G."/>
            <person name="Scherer S.E."/>
            <person name="Li P.W."/>
            <person name="Hoskins R.A."/>
            <person name="Galle R.F."/>
            <person name="George R.A."/>
            <person name="Lewis S.E."/>
            <person name="Richards S."/>
            <person name="Ashburner M."/>
            <person name="Henderson S.N."/>
            <person name="Sutton G.G."/>
            <person name="Wortman J.R."/>
            <person name="Yandell M.D."/>
            <person name="Zhang Q."/>
            <person name="Chen L.X."/>
            <person name="Brandon R.C."/>
            <person name="Rogers Y.-H.C."/>
            <person name="Blazej R.G."/>
            <person name="Champe M."/>
            <person name="Pfeiffer B.D."/>
            <person name="Wan K.H."/>
            <person name="Doyle C."/>
            <person name="Baxter E.G."/>
            <person name="Helt G."/>
            <person name="Nelson C.R."/>
            <person name="Miklos G.L.G."/>
            <person name="Abril J.F."/>
            <person name="Agbayani A."/>
            <person name="An H.-J."/>
            <person name="Andrews-Pfannkoch C."/>
            <person name="Baldwin D."/>
            <person name="Ballew R.M."/>
            <person name="Basu A."/>
            <person name="Baxendale J."/>
            <person name="Bayraktaroglu L."/>
            <person name="Beasley E.M."/>
            <person name="Beeson K.Y."/>
            <person name="Benos P.V."/>
            <person name="Berman B.P."/>
            <person name="Bhandari D."/>
            <person name="Bolshakov S."/>
            <person name="Borkova D."/>
            <person name="Botchan M.R."/>
            <person name="Bouck J."/>
            <person name="Brokstein P."/>
            <person name="Brottier P."/>
            <person name="Burtis K.C."/>
            <person name="Busam D.A."/>
            <person name="Butler H."/>
            <person name="Cadieu E."/>
            <person name="Center A."/>
            <person name="Chandra I."/>
            <person name="Cherry J.M."/>
            <person name="Cawley S."/>
            <person name="Dahlke C."/>
            <person name="Davenport L.B."/>
            <person name="Davies P."/>
            <person name="de Pablos B."/>
            <person name="Delcher A."/>
            <person name="Deng Z."/>
            <person name="Mays A.D."/>
            <person name="Dew I."/>
            <person name="Dietz S.M."/>
            <person name="Dodson K."/>
            <person name="Doup L.E."/>
            <person name="Downes M."/>
            <person name="Dugan-Rocha S."/>
            <person name="Dunkov B.C."/>
            <person name="Dunn P."/>
            <person name="Durbin K.J."/>
            <person name="Evangelista C.C."/>
            <person name="Ferraz C."/>
            <person name="Ferriera S."/>
            <person name="Fleischmann W."/>
            <person name="Fosler C."/>
            <person name="Gabrielian A.E."/>
            <person name="Garg N.S."/>
            <person name="Gelbart W.M."/>
            <person name="Glasser K."/>
            <person name="Glodek A."/>
            <person name="Gong F."/>
            <person name="Gorrell J.H."/>
            <person name="Gu Z."/>
            <person name="Guan P."/>
            <person name="Harris M."/>
            <person name="Harris N.L."/>
            <person name="Harvey D.A."/>
            <person name="Heiman T.J."/>
            <person name="Hernandez J.R."/>
            <person name="Houck J."/>
            <person name="Hostin D."/>
            <person name="Houston K.A."/>
            <person name="Howland T.J."/>
            <person name="Wei M.-H."/>
            <person name="Ibegwam C."/>
            <person name="Jalali M."/>
            <person name="Kalush F."/>
            <person name="Karpen G.H."/>
            <person name="Ke Z."/>
            <person name="Kennison J.A."/>
            <person name="Ketchum K.A."/>
            <person name="Kimmel B.E."/>
            <person name="Kodira C.D."/>
            <person name="Kraft C.L."/>
            <person name="Kravitz S."/>
            <person name="Kulp D."/>
            <person name="Lai Z."/>
            <person name="Lasko P."/>
            <person name="Lei Y."/>
            <person name="Levitsky A.A."/>
            <person name="Li J.H."/>
            <person name="Li Z."/>
            <person name="Liang Y."/>
            <person name="Lin X."/>
            <person name="Liu X."/>
            <person name="Mattei B."/>
            <person name="McIntosh T.C."/>
            <person name="McLeod M.P."/>
            <person name="McPherson D."/>
            <person name="Merkulov G."/>
            <person name="Milshina N.V."/>
            <person name="Mobarry C."/>
            <person name="Morris J."/>
            <person name="Moshrefi A."/>
            <person name="Mount S.M."/>
            <person name="Moy M."/>
            <person name="Murphy B."/>
            <person name="Murphy L."/>
            <person name="Muzny D.M."/>
            <person name="Nelson D.L."/>
            <person name="Nelson D.R."/>
            <person name="Nelson K.A."/>
            <person name="Nixon K."/>
            <person name="Nusskern D.R."/>
            <person name="Pacleb J.M."/>
            <person name="Palazzolo M."/>
            <person name="Pittman G.S."/>
            <person name="Pan S."/>
            <person name="Pollard J."/>
            <person name="Puri V."/>
            <person name="Reese M.G."/>
            <person name="Reinert K."/>
            <person name="Remington K."/>
            <person name="Saunders R.D.C."/>
            <person name="Scheeler F."/>
            <person name="Shen H."/>
            <person name="Shue B.C."/>
            <person name="Siden-Kiamos I."/>
            <person name="Simpson M."/>
            <person name="Skupski M.P."/>
            <person name="Smith T.J."/>
            <person name="Spier E."/>
            <person name="Spradling A.C."/>
            <person name="Stapleton M."/>
            <person name="Strong R."/>
            <person name="Sun E."/>
            <person name="Svirskas R."/>
            <person name="Tector C."/>
            <person name="Turner R."/>
            <person name="Venter E."/>
            <person name="Wang A.H."/>
            <person name="Wang X."/>
            <person name="Wang Z.-Y."/>
            <person name="Wassarman D.A."/>
            <person name="Weinstock G.M."/>
            <person name="Weissenbach J."/>
            <person name="Williams S.M."/>
            <person name="Woodage T."/>
            <person name="Worley K.C."/>
            <person name="Wu D."/>
            <person name="Yang S."/>
            <person name="Yao Q.A."/>
            <person name="Ye J."/>
            <person name="Yeh R.-F."/>
            <person name="Zaveri J.S."/>
            <person name="Zhan M."/>
            <person name="Zhang G."/>
            <person name="Zhao Q."/>
            <person name="Zheng L."/>
            <person name="Zheng X.H."/>
            <person name="Zhong F.N."/>
            <person name="Zhong W."/>
            <person name="Zhou X."/>
            <person name="Zhu S.C."/>
            <person name="Zhu X."/>
            <person name="Smith H.O."/>
            <person name="Gibbs R.A."/>
            <person name="Myers E.W."/>
            <person name="Rubin G.M."/>
            <person name="Venter J.C."/>
        </authorList>
    </citation>
    <scope>NUCLEOTIDE SEQUENCE [LARGE SCALE GENOMIC DNA]</scope>
    <source>
        <strain evidence="19">Berkeley</strain>
    </source>
</reference>
<reference evidence="19" key="4">
    <citation type="journal article" date="2002" name="Genome Biol.">
        <title>Annotation of the Drosophila melanogaster euchromatic genome: a systematic review.</title>
        <authorList>
            <person name="Misra S."/>
            <person name="Crosby M.A."/>
            <person name="Mungall C.J."/>
            <person name="Matthews B.B."/>
            <person name="Campbell K.S."/>
            <person name="Hradecky P."/>
            <person name="Huang Y."/>
            <person name="Kaminker J.S."/>
            <person name="Millburn G.H."/>
            <person name="Prochnik S.E."/>
            <person name="Smith C.D."/>
            <person name="Tupy J.L."/>
            <person name="Whitfield E.J."/>
            <person name="Bayraktaroglu L."/>
            <person name="Berman B.P."/>
            <person name="Bettencourt B.R."/>
            <person name="Celniker S.E."/>
            <person name="de Grey A.D.N.J."/>
            <person name="Drysdale R.A."/>
            <person name="Harris N.L."/>
            <person name="Richter J."/>
            <person name="Russo S."/>
            <person name="Schroeder A.J."/>
            <person name="Shu S.Q."/>
            <person name="Stapleton M."/>
            <person name="Yamada C."/>
            <person name="Ashburner M."/>
            <person name="Gelbart W.M."/>
            <person name="Rubin G.M."/>
            <person name="Lewis S.E."/>
        </authorList>
    </citation>
    <scope>GENOME REANNOTATION</scope>
    <source>
        <strain evidence="19">Berkeley</strain>
    </source>
</reference>
<reference evidence="15" key="5">
    <citation type="submission" date="2002-04" db="EMBL/GenBank/DDBJ databases">
        <authorList>
            <person name="Stapleton M."/>
            <person name="Brokstein P."/>
            <person name="Hong L."/>
            <person name="Agbayani A."/>
            <person name="Carlson J."/>
            <person name="Champe M."/>
            <person name="Chavez C."/>
            <person name="Dorsett V."/>
            <person name="Dresnek D."/>
            <person name="Farfan D."/>
            <person name="Frise E."/>
            <person name="George R."/>
            <person name="Gonzalez M."/>
            <person name="Guarin H."/>
            <person name="Kronmiller B."/>
            <person name="Li P."/>
            <person name="Liao G."/>
            <person name="Miranda A."/>
            <person name="Mungall C.J."/>
            <person name="Nunoo J."/>
            <person name="Pacleb J."/>
            <person name="Paragas V."/>
            <person name="Park S."/>
            <person name="Patel S."/>
            <person name="Phouanenavong S."/>
            <person name="Wan K."/>
            <person name="Yu C."/>
            <person name="Lewis S.E."/>
            <person name="Rubin G.M."/>
            <person name="Celniker S."/>
        </authorList>
    </citation>
    <scope>NUCLEOTIDE SEQUENCE [LARGE SCALE MRNA]</scope>
</reference>
<reference evidence="12" key="6">
    <citation type="journal article" date="2002" name="Glycobiology">
        <title>Identification and characterization of a Drosophila melanogaster ortholog of human beta1,4-galactosyltransferase VII.</title>
        <authorList>
            <person name="Vadaie N."/>
            <person name="Hulinsky R.S."/>
            <person name="Jarvis D.L."/>
        </authorList>
    </citation>
    <scope>FUNCTION</scope>
    <scope>CATALYTIC ACTIVITY</scope>
    <scope>COFACTOR</scope>
    <scope>BIOPHYSICOCHEMICAL PROPERTIES</scope>
    <scope>SUBCELLULAR LOCATION</scope>
</reference>
<reference evidence="12" key="7">
    <citation type="journal article" date="2003" name="J. Biol. Chem.">
        <title>Proteoglycan UDP-galactose:beta-xylose beta 1,4-galactosyltransferase I is essential for viability in Drosophila melanogaster.</title>
        <authorList>
            <person name="Takemae H."/>
            <person name="Ueda R."/>
            <person name="Okubo R."/>
            <person name="Nakato H."/>
            <person name="Izumi S."/>
            <person name="Saigo K."/>
            <person name="Nishihara S."/>
        </authorList>
    </citation>
    <scope>FUNCTION</scope>
    <scope>CATALYTIC ACTIVITY</scope>
    <scope>DISRUPTION PHENOTYPE</scope>
</reference>
<reference evidence="20" key="8">
    <citation type="journal article" date="2010" name="J. Biol. Chem.">
        <title>Crystal structure of the catalytic domain of Drosophila beta1,4-Galactosyltransferase-7.</title>
        <authorList>
            <person name="Ramakrishnan B."/>
            <person name="Qasba P.K."/>
        </authorList>
    </citation>
    <scope>X-RAY CRYSTALLOGRAPHY (1.81 ANGSTROMS) OF 71-311 IN COMPLEX WITH MANGANESE AND UDP</scope>
    <scope>FUNCTION</scope>
    <scope>CATALYTIC ACTIVITY</scope>
    <scope>COFACTOR</scope>
    <scope>DISULFIDE BONDS</scope>
</reference>
<reference evidence="21 22 23" key="9">
    <citation type="journal article" date="2013" name="J. Biol. Chem.">
        <title>Crystal structures of beta-1,4-galactosyltransferase 7 enzyme reveal conformational changes and substrate Binding.</title>
        <authorList>
            <person name="Tsutsui Y."/>
            <person name="Ramakrishnan B."/>
            <person name="Qasba P.K."/>
        </authorList>
    </citation>
    <scope>X-RAY CRYSTALLOGRAPHY (2.00 ANGSTROMS) OF 71-311 OF WILD TYPE AND MUTANT ASN-211 IN COMPLEX WITH MANGANESE; UDP-ALPHA-D-GALACTOSE AND UDP</scope>
    <scope>COFACTOR</scope>
    <scope>DISULFIDE BONDS</scope>
</reference>
<name>B4GT7_DROME</name>
<sequence length="322" mass="36499">MVNISTINWVFVCGLSFCLGGIAVLSLMPLGSDCVCPLSNPLAKLAGGGEGVSVIKKEPADEKQPQPHDHGASVHKMALLVPFRDRFEELLQFVPHMTAFLKRQGVAHHIFVLNQVDRFRFNRASLINVGFQFASDVYDYIAMHDVDLLPLNDNLLYEYPSSLGPLHIAGPKLHPKYHYDNFVGGILLVRREHFKQMNGMSNQYWGWGLEDDEFFVRIRDAGLQVTRPQNIKTGTNDTFSHIHNRYHRKRDTQKCFNQKEMTRKRDHKTGLDNVKYKILKVHEMLIDQVPVTILNILLDCDVNKTPWCDCSGTAAAASAVQT</sequence>
<proteinExistence type="evidence at protein level"/>
<organism evidence="19">
    <name type="scientific">Drosophila melanogaster</name>
    <name type="common">Fruit fly</name>
    <dbReference type="NCBI Taxonomy" id="7227"/>
    <lineage>
        <taxon>Eukaryota</taxon>
        <taxon>Metazoa</taxon>
        <taxon>Ecdysozoa</taxon>
        <taxon>Arthropoda</taxon>
        <taxon>Hexapoda</taxon>
        <taxon>Insecta</taxon>
        <taxon>Pterygota</taxon>
        <taxon>Neoptera</taxon>
        <taxon>Endopterygota</taxon>
        <taxon>Diptera</taxon>
        <taxon>Brachycera</taxon>
        <taxon>Muscomorpha</taxon>
        <taxon>Ephydroidea</taxon>
        <taxon>Drosophilidae</taxon>
        <taxon>Drosophila</taxon>
        <taxon>Sophophora</taxon>
    </lineage>
</organism>